<evidence type="ECO:0000255" key="1">
    <source>
        <dbReference type="HAMAP-Rule" id="MF_00443"/>
    </source>
</evidence>
<feature type="chain" id="PRO_0000162825" description="Thiazole synthase">
    <location>
        <begin position="1"/>
        <end position="252"/>
    </location>
</feature>
<feature type="active site" description="Schiff-base intermediate with DXP" evidence="1">
    <location>
        <position position="91"/>
    </location>
</feature>
<feature type="binding site" evidence="1">
    <location>
        <position position="152"/>
    </location>
    <ligand>
        <name>1-deoxy-D-xylulose 5-phosphate</name>
        <dbReference type="ChEBI" id="CHEBI:57792"/>
    </ligand>
</feature>
<feature type="binding site" evidence="1">
    <location>
        <begin position="179"/>
        <end position="180"/>
    </location>
    <ligand>
        <name>1-deoxy-D-xylulose 5-phosphate</name>
        <dbReference type="ChEBI" id="CHEBI:57792"/>
    </ligand>
</feature>
<feature type="binding site" evidence="1">
    <location>
        <begin position="201"/>
        <end position="202"/>
    </location>
    <ligand>
        <name>1-deoxy-D-xylulose 5-phosphate</name>
        <dbReference type="ChEBI" id="CHEBI:57792"/>
    </ligand>
</feature>
<comment type="function">
    <text evidence="1">Catalyzes the rearrangement of 1-deoxy-D-xylulose 5-phosphate (DXP) to produce the thiazole phosphate moiety of thiamine. Sulfur is provided by the thiocarboxylate moiety of the carrier protein ThiS. In vitro, sulfur can be provided by H(2)S.</text>
</comment>
<comment type="catalytic activity">
    <reaction evidence="1">
        <text>[ThiS sulfur-carrier protein]-C-terminal-Gly-aminoethanethioate + 2-iminoacetate + 1-deoxy-D-xylulose 5-phosphate = [ThiS sulfur-carrier protein]-C-terminal Gly-Gly + 2-[(2R,5Z)-2-carboxy-4-methylthiazol-5(2H)-ylidene]ethyl phosphate + 2 H2O + H(+)</text>
        <dbReference type="Rhea" id="RHEA:26297"/>
        <dbReference type="Rhea" id="RHEA-COMP:12909"/>
        <dbReference type="Rhea" id="RHEA-COMP:19908"/>
        <dbReference type="ChEBI" id="CHEBI:15377"/>
        <dbReference type="ChEBI" id="CHEBI:15378"/>
        <dbReference type="ChEBI" id="CHEBI:57792"/>
        <dbReference type="ChEBI" id="CHEBI:62899"/>
        <dbReference type="ChEBI" id="CHEBI:77846"/>
        <dbReference type="ChEBI" id="CHEBI:90778"/>
        <dbReference type="ChEBI" id="CHEBI:232372"/>
        <dbReference type="EC" id="2.8.1.10"/>
    </reaction>
</comment>
<comment type="pathway">
    <text evidence="1">Cofactor biosynthesis; thiamine diphosphate biosynthesis.</text>
</comment>
<comment type="subunit">
    <text evidence="1">Homotetramer. Forms heterodimers with either ThiH or ThiS.</text>
</comment>
<comment type="subcellular location">
    <subcellularLocation>
        <location evidence="1">Cytoplasm</location>
    </subcellularLocation>
</comment>
<comment type="similarity">
    <text evidence="1">Belongs to the ThiG family.</text>
</comment>
<keyword id="KW-0963">Cytoplasm</keyword>
<keyword id="KW-1185">Reference proteome</keyword>
<keyword id="KW-0704">Schiff base</keyword>
<keyword id="KW-0784">Thiamine biosynthesis</keyword>
<keyword id="KW-0808">Transferase</keyword>
<dbReference type="EC" id="2.8.1.10" evidence="1"/>
<dbReference type="EMBL" id="CP000009">
    <property type="protein sequence ID" value="AAW61962.1"/>
    <property type="molecule type" value="Genomic_DNA"/>
</dbReference>
<dbReference type="RefSeq" id="WP_011253732.1">
    <property type="nucleotide sequence ID" value="NC_006677.1"/>
</dbReference>
<dbReference type="SMR" id="Q5FNT5"/>
<dbReference type="STRING" id="290633.GOX2227"/>
<dbReference type="KEGG" id="gox:GOX2227"/>
<dbReference type="eggNOG" id="COG2022">
    <property type="taxonomic scope" value="Bacteria"/>
</dbReference>
<dbReference type="HOGENOM" id="CLU_062233_1_0_5"/>
<dbReference type="UniPathway" id="UPA00060"/>
<dbReference type="Proteomes" id="UP000006375">
    <property type="component" value="Chromosome"/>
</dbReference>
<dbReference type="GO" id="GO:0005737">
    <property type="term" value="C:cytoplasm"/>
    <property type="evidence" value="ECO:0007669"/>
    <property type="project" value="UniProtKB-SubCell"/>
</dbReference>
<dbReference type="GO" id="GO:1990107">
    <property type="term" value="F:thiazole synthase activity"/>
    <property type="evidence" value="ECO:0007669"/>
    <property type="project" value="UniProtKB-EC"/>
</dbReference>
<dbReference type="GO" id="GO:0009229">
    <property type="term" value="P:thiamine diphosphate biosynthetic process"/>
    <property type="evidence" value="ECO:0007669"/>
    <property type="project" value="UniProtKB-UniRule"/>
</dbReference>
<dbReference type="CDD" id="cd04728">
    <property type="entry name" value="ThiG"/>
    <property type="match status" value="1"/>
</dbReference>
<dbReference type="Gene3D" id="3.20.20.70">
    <property type="entry name" value="Aldolase class I"/>
    <property type="match status" value="1"/>
</dbReference>
<dbReference type="HAMAP" id="MF_00443">
    <property type="entry name" value="ThiG"/>
    <property type="match status" value="1"/>
</dbReference>
<dbReference type="InterPro" id="IPR013785">
    <property type="entry name" value="Aldolase_TIM"/>
</dbReference>
<dbReference type="InterPro" id="IPR033983">
    <property type="entry name" value="Thiazole_synthase_ThiG"/>
</dbReference>
<dbReference type="InterPro" id="IPR008867">
    <property type="entry name" value="ThiG"/>
</dbReference>
<dbReference type="PANTHER" id="PTHR34266">
    <property type="entry name" value="THIAZOLE SYNTHASE"/>
    <property type="match status" value="1"/>
</dbReference>
<dbReference type="PANTHER" id="PTHR34266:SF2">
    <property type="entry name" value="THIAZOLE SYNTHASE"/>
    <property type="match status" value="1"/>
</dbReference>
<dbReference type="Pfam" id="PF05690">
    <property type="entry name" value="ThiG"/>
    <property type="match status" value="1"/>
</dbReference>
<dbReference type="SUPFAM" id="SSF110399">
    <property type="entry name" value="ThiG-like"/>
    <property type="match status" value="1"/>
</dbReference>
<reference key="1">
    <citation type="journal article" date="2005" name="Nat. Biotechnol.">
        <title>Complete genome sequence of the acetic acid bacterium Gluconobacter oxydans.</title>
        <authorList>
            <person name="Prust C."/>
            <person name="Hoffmeister M."/>
            <person name="Liesegang H."/>
            <person name="Wiezer A."/>
            <person name="Fricke W.F."/>
            <person name="Ehrenreich A."/>
            <person name="Gottschalk G."/>
            <person name="Deppenmeier U."/>
        </authorList>
    </citation>
    <scope>NUCLEOTIDE SEQUENCE [LARGE SCALE GENOMIC DNA]</scope>
    <source>
        <strain>621H</strain>
    </source>
</reference>
<accession>Q5FNT5</accession>
<name>THIG_GLUOX</name>
<organism>
    <name type="scientific">Gluconobacter oxydans (strain 621H)</name>
    <name type="common">Gluconobacter suboxydans</name>
    <dbReference type="NCBI Taxonomy" id="290633"/>
    <lineage>
        <taxon>Bacteria</taxon>
        <taxon>Pseudomonadati</taxon>
        <taxon>Pseudomonadota</taxon>
        <taxon>Alphaproteobacteria</taxon>
        <taxon>Acetobacterales</taxon>
        <taxon>Acetobacteraceae</taxon>
        <taxon>Gluconobacter</taxon>
    </lineage>
</organism>
<protein>
    <recommendedName>
        <fullName evidence="1">Thiazole synthase</fullName>
        <ecNumber evidence="1">2.8.1.10</ecNumber>
    </recommendedName>
</protein>
<proteinExistence type="inferred from homology"/>
<sequence>MFYGVDLTSRLMLGTAQYPSPQVLLEAIEASGAQVITVSLRREGAAGGAFRALLAKSRCRLLPNTAGCHTVREAVTTARMAREVFGTSWIKLEVIGHADTQQPDPFALVEAARVLCAEGFDVFPYTTEDLIVGEKLLEAGCKVLMPWGAPIGSGQGLRNLAGLRSMRAHFRDVPLVVDAGIGAPSQAAQAMELGFDAVLLNTAVAKAVDPVGMARAFGRAIQAGQEGFVAGLMPERDMASASTPVFGLAELA</sequence>
<gene>
    <name evidence="1" type="primary">thiG</name>
    <name type="ordered locus">GOX2227</name>
</gene>